<evidence type="ECO:0000255" key="1">
    <source>
        <dbReference type="HAMAP-Rule" id="MF_00270"/>
    </source>
</evidence>
<evidence type="ECO:0000305" key="2"/>
<gene>
    <name evidence="1" type="primary">rpsR</name>
    <name type="ordered locus">VSAL_I2764</name>
</gene>
<name>RS18_ALISL</name>
<protein>
    <recommendedName>
        <fullName evidence="1">Small ribosomal subunit protein bS18</fullName>
    </recommendedName>
    <alternativeName>
        <fullName evidence="2">30S ribosomal protein S18</fullName>
    </alternativeName>
</protein>
<feature type="chain" id="PRO_1000114394" description="Small ribosomal subunit protein bS18">
    <location>
        <begin position="1"/>
        <end position="75"/>
    </location>
</feature>
<proteinExistence type="inferred from homology"/>
<sequence length="75" mass="8897">MARFFRRRKFCRFTAEGVQEIDYKDVATLKNYITEAGKIVPSRITGTRAKYQRQLARAIKRSRYLALLPYTDKHL</sequence>
<organism>
    <name type="scientific">Aliivibrio salmonicida (strain LFI1238)</name>
    <name type="common">Vibrio salmonicida (strain LFI1238)</name>
    <dbReference type="NCBI Taxonomy" id="316275"/>
    <lineage>
        <taxon>Bacteria</taxon>
        <taxon>Pseudomonadati</taxon>
        <taxon>Pseudomonadota</taxon>
        <taxon>Gammaproteobacteria</taxon>
        <taxon>Vibrionales</taxon>
        <taxon>Vibrionaceae</taxon>
        <taxon>Aliivibrio</taxon>
    </lineage>
</organism>
<keyword id="KW-0687">Ribonucleoprotein</keyword>
<keyword id="KW-0689">Ribosomal protein</keyword>
<keyword id="KW-0694">RNA-binding</keyword>
<keyword id="KW-0699">rRNA-binding</keyword>
<reference key="1">
    <citation type="journal article" date="2008" name="BMC Genomics">
        <title>The genome sequence of the fish pathogen Aliivibrio salmonicida strain LFI1238 shows extensive evidence of gene decay.</title>
        <authorList>
            <person name="Hjerde E."/>
            <person name="Lorentzen M.S."/>
            <person name="Holden M.T."/>
            <person name="Seeger K."/>
            <person name="Paulsen S."/>
            <person name="Bason N."/>
            <person name="Churcher C."/>
            <person name="Harris D."/>
            <person name="Norbertczak H."/>
            <person name="Quail M.A."/>
            <person name="Sanders S."/>
            <person name="Thurston S."/>
            <person name="Parkhill J."/>
            <person name="Willassen N.P."/>
            <person name="Thomson N.R."/>
        </authorList>
    </citation>
    <scope>NUCLEOTIDE SEQUENCE [LARGE SCALE GENOMIC DNA]</scope>
    <source>
        <strain>LFI1238</strain>
    </source>
</reference>
<comment type="function">
    <text evidence="1">Binds as a heterodimer with protein bS6 to the central domain of the 16S rRNA, where it helps stabilize the platform of the 30S subunit.</text>
</comment>
<comment type="subunit">
    <text evidence="1">Part of the 30S ribosomal subunit. Forms a tight heterodimer with protein bS6.</text>
</comment>
<comment type="similarity">
    <text evidence="1">Belongs to the bacterial ribosomal protein bS18 family.</text>
</comment>
<accession>B6EMP4</accession>
<dbReference type="EMBL" id="FM178379">
    <property type="protein sequence ID" value="CAQ80448.1"/>
    <property type="molecule type" value="Genomic_DNA"/>
</dbReference>
<dbReference type="RefSeq" id="WP_005421136.1">
    <property type="nucleotide sequence ID" value="NC_011312.1"/>
</dbReference>
<dbReference type="SMR" id="B6EMP4"/>
<dbReference type="GeneID" id="56276704"/>
<dbReference type="KEGG" id="vsa:VSAL_I2764"/>
<dbReference type="eggNOG" id="COG0238">
    <property type="taxonomic scope" value="Bacteria"/>
</dbReference>
<dbReference type="HOGENOM" id="CLU_148710_2_3_6"/>
<dbReference type="Proteomes" id="UP000001730">
    <property type="component" value="Chromosome 1"/>
</dbReference>
<dbReference type="GO" id="GO:0022627">
    <property type="term" value="C:cytosolic small ribosomal subunit"/>
    <property type="evidence" value="ECO:0007669"/>
    <property type="project" value="TreeGrafter"/>
</dbReference>
<dbReference type="GO" id="GO:0070181">
    <property type="term" value="F:small ribosomal subunit rRNA binding"/>
    <property type="evidence" value="ECO:0007669"/>
    <property type="project" value="TreeGrafter"/>
</dbReference>
<dbReference type="GO" id="GO:0003735">
    <property type="term" value="F:structural constituent of ribosome"/>
    <property type="evidence" value="ECO:0007669"/>
    <property type="project" value="InterPro"/>
</dbReference>
<dbReference type="GO" id="GO:0006412">
    <property type="term" value="P:translation"/>
    <property type="evidence" value="ECO:0007669"/>
    <property type="project" value="UniProtKB-UniRule"/>
</dbReference>
<dbReference type="FunFam" id="4.10.640.10:FF:000001">
    <property type="entry name" value="30S ribosomal protein S18"/>
    <property type="match status" value="1"/>
</dbReference>
<dbReference type="Gene3D" id="4.10.640.10">
    <property type="entry name" value="Ribosomal protein S18"/>
    <property type="match status" value="1"/>
</dbReference>
<dbReference type="HAMAP" id="MF_00270">
    <property type="entry name" value="Ribosomal_bS18"/>
    <property type="match status" value="1"/>
</dbReference>
<dbReference type="InterPro" id="IPR001648">
    <property type="entry name" value="Ribosomal_bS18"/>
</dbReference>
<dbReference type="InterPro" id="IPR018275">
    <property type="entry name" value="Ribosomal_bS18_CS"/>
</dbReference>
<dbReference type="InterPro" id="IPR036870">
    <property type="entry name" value="Ribosomal_bS18_sf"/>
</dbReference>
<dbReference type="NCBIfam" id="TIGR00165">
    <property type="entry name" value="S18"/>
    <property type="match status" value="1"/>
</dbReference>
<dbReference type="PANTHER" id="PTHR13479">
    <property type="entry name" value="30S RIBOSOMAL PROTEIN S18"/>
    <property type="match status" value="1"/>
</dbReference>
<dbReference type="PANTHER" id="PTHR13479:SF40">
    <property type="entry name" value="SMALL RIBOSOMAL SUBUNIT PROTEIN BS18M"/>
    <property type="match status" value="1"/>
</dbReference>
<dbReference type="Pfam" id="PF01084">
    <property type="entry name" value="Ribosomal_S18"/>
    <property type="match status" value="1"/>
</dbReference>
<dbReference type="PRINTS" id="PR00974">
    <property type="entry name" value="RIBOSOMALS18"/>
</dbReference>
<dbReference type="SUPFAM" id="SSF46911">
    <property type="entry name" value="Ribosomal protein S18"/>
    <property type="match status" value="1"/>
</dbReference>
<dbReference type="PROSITE" id="PS00057">
    <property type="entry name" value="RIBOSOMAL_S18"/>
    <property type="match status" value="1"/>
</dbReference>